<name>MOC2B_HUMAN</name>
<keyword id="KW-0002">3D-structure</keyword>
<keyword id="KW-0963">Cytoplasm</keyword>
<keyword id="KW-0225">Disease variant</keyword>
<keyword id="KW-0501">Molybdenum cofactor biosynthesis</keyword>
<keyword id="KW-0597">Phosphoprotein</keyword>
<keyword id="KW-1267">Proteomics identification</keyword>
<keyword id="KW-1185">Reference proteome</keyword>
<keyword id="KW-0808">Transferase</keyword>
<accession>O96007</accession>
<accession>Q6IAI3</accession>
<comment type="function">
    <text evidence="1 4 5">Catalytic subunit of the molybdopterin synthase complex, a complex that catalyzes the conversion of precursor Z into molybdopterin. Acts by mediating the incorporation of 2 sulfur atoms from thiocarboxylated MOCS2A into precursor Z to generate a dithiolene group.</text>
</comment>
<comment type="catalytic activity">
    <reaction evidence="1 4 5">
        <text>2 [molybdopterin-synthase sulfur-carrier protein]-C-terminal-Gly-aminoethanethioate + cyclic pyranopterin phosphate + H2O = molybdopterin + 2 [molybdopterin-synthase sulfur-carrier protein]-C-terminal Gly-Gly + 2 H(+)</text>
        <dbReference type="Rhea" id="RHEA:26333"/>
        <dbReference type="Rhea" id="RHEA-COMP:12202"/>
        <dbReference type="Rhea" id="RHEA-COMP:19907"/>
        <dbReference type="ChEBI" id="CHEBI:15377"/>
        <dbReference type="ChEBI" id="CHEBI:15378"/>
        <dbReference type="ChEBI" id="CHEBI:58698"/>
        <dbReference type="ChEBI" id="CHEBI:59648"/>
        <dbReference type="ChEBI" id="CHEBI:90778"/>
        <dbReference type="ChEBI" id="CHEBI:232372"/>
        <dbReference type="EC" id="2.8.1.12"/>
    </reaction>
</comment>
<comment type="pathway">
    <text evidence="1">Cofactor biosynthesis; molybdopterin biosynthesis.</text>
</comment>
<comment type="subunit">
    <text evidence="1">Heterotetramer; composed of 2 small (MOCS2A) and 2 large (MOCS2B) subunits.</text>
</comment>
<comment type="interaction">
    <interactant intactId="EBI-723640">
        <id>O96007</id>
    </interactant>
    <interactant intactId="EBI-9056334">
        <id>O96033</id>
        <label>MOCS2</label>
    </interactant>
    <organismsDiffer>false</organismsDiffer>
    <experiments>2</experiments>
</comment>
<comment type="subcellular location">
    <subcellularLocation>
        <location evidence="1 5">Cytoplasm</location>
        <location evidence="1 5">Cytosol</location>
    </subcellularLocation>
</comment>
<comment type="tissue specificity">
    <text evidence="2">Highest levels are found in heart and skeletal muscle. Lower levels are present in brain, kidney and pancreas. Very low levels are found in lung and peripheral blood leukocytes.</text>
</comment>
<comment type="disease" evidence="3 6 7">
    <disease id="DI-01990">
        <name>Molybdenum cofactor deficiency B</name>
        <acronym>MOCODB</acronym>
        <description>An autosomal recessive metabolic disorder characterized by neonatal onset of intractable seizures, opisthotonus, and facial dysmorphism associated with hypouricemia and elevated urinary sulfite levels. Affected individuals show severe neurologic damage and often die in early childhood.</description>
        <dbReference type="MIM" id="252160"/>
    </disease>
    <text>The disease is caused by variants affecting the gene represented in this entry.</text>
</comment>
<comment type="miscellaneous">
    <text>This protein is produced by a bicistronic gene which also produces the small subunit (MOCS2A) from an overlapping reading frame. Expression of these 2 proteins are related since a mutation that removes the start codon of the small subunit (MOCS2A) also impairs expression of the large subunit (MOCS2B).</text>
</comment>
<comment type="similarity">
    <text evidence="1">Belongs to the MoaE family. MOCS2B subfamily.</text>
</comment>
<sequence length="188" mass="20944">MSSLEISSSCFSLETKLPLSPPLVEDSAFEPSRKDMDEVEEKSKDVINFTAEKLSVDEVSQLVISPLCGAISLFVGTTRNNFEGKKVISLEYEAYLPMAENEVRKICSDIRQKWPVKHIAVFHRLGLVPVSEASIIIAVSSAHRAASLEAVSYAIDTLKAKVPIWKKEIYEESSTWKGNKECFWASNS</sequence>
<protein>
    <recommendedName>
        <fullName evidence="1">Molybdopterin synthase catalytic subunit</fullName>
        <ecNumber evidence="1">2.8.1.12</ecNumber>
    </recommendedName>
    <alternativeName>
        <fullName>MOCO1-B</fullName>
    </alternativeName>
    <alternativeName>
        <fullName evidence="1">Molybdenum cofactor synthesis protein 2 large subunit</fullName>
    </alternativeName>
    <alternativeName>
        <fullName evidence="1">Molybdenum cofactor synthesis protein 2B</fullName>
        <shortName evidence="1">MOCS2B</shortName>
    </alternativeName>
    <alternativeName>
        <fullName>Molybdopterin-synthase large subunit</fullName>
        <shortName>MPT synthase large subunit</shortName>
    </alternativeName>
</protein>
<organism>
    <name type="scientific">Homo sapiens</name>
    <name type="common">Human</name>
    <dbReference type="NCBI Taxonomy" id="9606"/>
    <lineage>
        <taxon>Eukaryota</taxon>
        <taxon>Metazoa</taxon>
        <taxon>Chordata</taxon>
        <taxon>Craniata</taxon>
        <taxon>Vertebrata</taxon>
        <taxon>Euteleostomi</taxon>
        <taxon>Mammalia</taxon>
        <taxon>Eutheria</taxon>
        <taxon>Euarchontoglires</taxon>
        <taxon>Primates</taxon>
        <taxon>Haplorrhini</taxon>
        <taxon>Catarrhini</taxon>
        <taxon>Hominidae</taxon>
        <taxon>Homo</taxon>
    </lineage>
</organism>
<gene>
    <name evidence="1" type="primary">MOCS2</name>
    <name type="synonym">MCBPE</name>
    <name type="synonym">MOCO1</name>
</gene>
<evidence type="ECO:0000255" key="1">
    <source>
        <dbReference type="HAMAP-Rule" id="MF_03052"/>
    </source>
</evidence>
<evidence type="ECO:0000269" key="2">
    <source>
    </source>
</evidence>
<evidence type="ECO:0000269" key="3">
    <source>
    </source>
</evidence>
<evidence type="ECO:0000269" key="4">
    <source>
    </source>
</evidence>
<evidence type="ECO:0000269" key="5">
    <source>
    </source>
</evidence>
<evidence type="ECO:0000269" key="6">
    <source>
    </source>
</evidence>
<evidence type="ECO:0000269" key="7">
    <source>
    </source>
</evidence>
<evidence type="ECO:0007744" key="8">
    <source>
    </source>
</evidence>
<evidence type="ECO:0007744" key="9">
    <source>
    </source>
</evidence>
<evidence type="ECO:0007744" key="10">
    <source>
    </source>
</evidence>
<evidence type="ECO:0007744" key="11">
    <source>
    </source>
</evidence>
<evidence type="ECO:0007744" key="12">
    <source>
    </source>
</evidence>
<evidence type="ECO:0007744" key="13">
    <source>
    </source>
</evidence>
<evidence type="ECO:0007744" key="14">
    <source>
    </source>
</evidence>
<evidence type="ECO:0007829" key="15">
    <source>
        <dbReference type="PDB" id="5MPO"/>
    </source>
</evidence>
<reference key="1">
    <citation type="journal article" date="1999" name="Am. J. Hum. Genet.">
        <title>Human molybdopterin synthase gene: identification of a bicistronic transcript with overlapping reading frames.</title>
        <authorList>
            <person name="Stallmeyer B."/>
            <person name="Drugeon G."/>
            <person name="Reiss J."/>
            <person name="Haenni A.L."/>
            <person name="Mendel R.R."/>
        </authorList>
    </citation>
    <scope>NUCLEOTIDE SEQUENCE [MRNA]</scope>
    <scope>IDENTIFICATION OF BICISTRONIC GENE</scope>
    <scope>TISSUE SPECIFICITY</scope>
    <source>
        <tissue>Liver</tissue>
    </source>
</reference>
<reference key="2">
    <citation type="journal article" date="1999" name="Nucleic Acids Res.">
        <title>The two subunits of human molybdopterin synthase: evidence for a bicistronic messenger RNA with overlapping reading frames.</title>
        <authorList>
            <person name="Sloan J."/>
            <person name="Kinghorn J.R."/>
            <person name="Unkles S.E."/>
        </authorList>
    </citation>
    <scope>NUCLEOTIDE SEQUENCE [MRNA]</scope>
</reference>
<reference key="3">
    <citation type="submission" date="1999-06" db="EMBL/GenBank/DDBJ databases">
        <authorList>
            <person name="Huang C."/>
            <person name="Huang Q."/>
            <person name="Wu T."/>
            <person name="Peng Y."/>
            <person name="Gu Y."/>
            <person name="Zhang L."/>
            <person name="Jiang C."/>
            <person name="Li Y."/>
            <person name="Han Z."/>
            <person name="Wang Y."/>
            <person name="Chen Z."/>
            <person name="Fu G."/>
        </authorList>
    </citation>
    <scope>NUCLEOTIDE SEQUENCE [MRNA]</scope>
    <source>
        <tissue>Adrenal gland</tissue>
    </source>
</reference>
<reference key="4">
    <citation type="journal article" date="2004" name="Nat. Genet.">
        <title>Complete sequencing and characterization of 21,243 full-length human cDNAs.</title>
        <authorList>
            <person name="Ota T."/>
            <person name="Suzuki Y."/>
            <person name="Nishikawa T."/>
            <person name="Otsuki T."/>
            <person name="Sugiyama T."/>
            <person name="Irie R."/>
            <person name="Wakamatsu A."/>
            <person name="Hayashi K."/>
            <person name="Sato H."/>
            <person name="Nagai K."/>
            <person name="Kimura K."/>
            <person name="Makita H."/>
            <person name="Sekine M."/>
            <person name="Obayashi M."/>
            <person name="Nishi T."/>
            <person name="Shibahara T."/>
            <person name="Tanaka T."/>
            <person name="Ishii S."/>
            <person name="Yamamoto J."/>
            <person name="Saito K."/>
            <person name="Kawai Y."/>
            <person name="Isono Y."/>
            <person name="Nakamura Y."/>
            <person name="Nagahari K."/>
            <person name="Murakami K."/>
            <person name="Yasuda T."/>
            <person name="Iwayanagi T."/>
            <person name="Wagatsuma M."/>
            <person name="Shiratori A."/>
            <person name="Sudo H."/>
            <person name="Hosoiri T."/>
            <person name="Kaku Y."/>
            <person name="Kodaira H."/>
            <person name="Kondo H."/>
            <person name="Sugawara M."/>
            <person name="Takahashi M."/>
            <person name="Kanda K."/>
            <person name="Yokoi T."/>
            <person name="Furuya T."/>
            <person name="Kikkawa E."/>
            <person name="Omura Y."/>
            <person name="Abe K."/>
            <person name="Kamihara K."/>
            <person name="Katsuta N."/>
            <person name="Sato K."/>
            <person name="Tanikawa M."/>
            <person name="Yamazaki M."/>
            <person name="Ninomiya K."/>
            <person name="Ishibashi T."/>
            <person name="Yamashita H."/>
            <person name="Murakawa K."/>
            <person name="Fujimori K."/>
            <person name="Tanai H."/>
            <person name="Kimata M."/>
            <person name="Watanabe M."/>
            <person name="Hiraoka S."/>
            <person name="Chiba Y."/>
            <person name="Ishida S."/>
            <person name="Ono Y."/>
            <person name="Takiguchi S."/>
            <person name="Watanabe S."/>
            <person name="Yosida M."/>
            <person name="Hotuta T."/>
            <person name="Kusano J."/>
            <person name="Kanehori K."/>
            <person name="Takahashi-Fujii A."/>
            <person name="Hara H."/>
            <person name="Tanase T.-O."/>
            <person name="Nomura Y."/>
            <person name="Togiya S."/>
            <person name="Komai F."/>
            <person name="Hara R."/>
            <person name="Takeuchi K."/>
            <person name="Arita M."/>
            <person name="Imose N."/>
            <person name="Musashino K."/>
            <person name="Yuuki H."/>
            <person name="Oshima A."/>
            <person name="Sasaki N."/>
            <person name="Aotsuka S."/>
            <person name="Yoshikawa Y."/>
            <person name="Matsunawa H."/>
            <person name="Ichihara T."/>
            <person name="Shiohata N."/>
            <person name="Sano S."/>
            <person name="Moriya S."/>
            <person name="Momiyama H."/>
            <person name="Satoh N."/>
            <person name="Takami S."/>
            <person name="Terashima Y."/>
            <person name="Suzuki O."/>
            <person name="Nakagawa S."/>
            <person name="Senoh A."/>
            <person name="Mizoguchi H."/>
            <person name="Goto Y."/>
            <person name="Shimizu F."/>
            <person name="Wakebe H."/>
            <person name="Hishigaki H."/>
            <person name="Watanabe T."/>
            <person name="Sugiyama A."/>
            <person name="Takemoto M."/>
            <person name="Kawakami B."/>
            <person name="Yamazaki M."/>
            <person name="Watanabe K."/>
            <person name="Kumagai A."/>
            <person name="Itakura S."/>
            <person name="Fukuzumi Y."/>
            <person name="Fujimori Y."/>
            <person name="Komiyama M."/>
            <person name="Tashiro H."/>
            <person name="Tanigami A."/>
            <person name="Fujiwara T."/>
            <person name="Ono T."/>
            <person name="Yamada K."/>
            <person name="Fujii Y."/>
            <person name="Ozaki K."/>
            <person name="Hirao M."/>
            <person name="Ohmori Y."/>
            <person name="Kawabata A."/>
            <person name="Hikiji T."/>
            <person name="Kobatake N."/>
            <person name="Inagaki H."/>
            <person name="Ikema Y."/>
            <person name="Okamoto S."/>
            <person name="Okitani R."/>
            <person name="Kawakami T."/>
            <person name="Noguchi S."/>
            <person name="Itoh T."/>
            <person name="Shigeta K."/>
            <person name="Senba T."/>
            <person name="Matsumura K."/>
            <person name="Nakajima Y."/>
            <person name="Mizuno T."/>
            <person name="Morinaga M."/>
            <person name="Sasaki M."/>
            <person name="Togashi T."/>
            <person name="Oyama M."/>
            <person name="Hata H."/>
            <person name="Watanabe M."/>
            <person name="Komatsu T."/>
            <person name="Mizushima-Sugano J."/>
            <person name="Satoh T."/>
            <person name="Shirai Y."/>
            <person name="Takahashi Y."/>
            <person name="Nakagawa K."/>
            <person name="Okumura K."/>
            <person name="Nagase T."/>
            <person name="Nomura N."/>
            <person name="Kikuchi H."/>
            <person name="Masuho Y."/>
            <person name="Yamashita R."/>
            <person name="Nakai K."/>
            <person name="Yada T."/>
            <person name="Nakamura Y."/>
            <person name="Ohara O."/>
            <person name="Isogai T."/>
            <person name="Sugano S."/>
        </authorList>
    </citation>
    <scope>NUCLEOTIDE SEQUENCE [LARGE SCALE MRNA]</scope>
    <source>
        <tissue>Uterus</tissue>
    </source>
</reference>
<reference key="5">
    <citation type="submission" date="2004-06" db="EMBL/GenBank/DDBJ databases">
        <title>Cloning of human full open reading frames in Gateway(TM) system entry vector (pDONR201).</title>
        <authorList>
            <person name="Ebert L."/>
            <person name="Schick M."/>
            <person name="Neubert P."/>
            <person name="Schatten R."/>
            <person name="Henze S."/>
            <person name="Korn B."/>
        </authorList>
    </citation>
    <scope>NUCLEOTIDE SEQUENCE [LARGE SCALE MRNA]</scope>
</reference>
<reference key="6">
    <citation type="submission" date="2005-07" db="EMBL/GenBank/DDBJ databases">
        <authorList>
            <person name="Mural R.J."/>
            <person name="Istrail S."/>
            <person name="Sutton G.G."/>
            <person name="Florea L."/>
            <person name="Halpern A.L."/>
            <person name="Mobarry C.M."/>
            <person name="Lippert R."/>
            <person name="Walenz B."/>
            <person name="Shatkay H."/>
            <person name="Dew I."/>
            <person name="Miller J.R."/>
            <person name="Flanigan M.J."/>
            <person name="Edwards N.J."/>
            <person name="Bolanos R."/>
            <person name="Fasulo D."/>
            <person name="Halldorsson B.V."/>
            <person name="Hannenhalli S."/>
            <person name="Turner R."/>
            <person name="Yooseph S."/>
            <person name="Lu F."/>
            <person name="Nusskern D.R."/>
            <person name="Shue B.C."/>
            <person name="Zheng X.H."/>
            <person name="Zhong F."/>
            <person name="Delcher A.L."/>
            <person name="Huson D.H."/>
            <person name="Kravitz S.A."/>
            <person name="Mouchard L."/>
            <person name="Reinert K."/>
            <person name="Remington K.A."/>
            <person name="Clark A.G."/>
            <person name="Waterman M.S."/>
            <person name="Eichler E.E."/>
            <person name="Adams M.D."/>
            <person name="Hunkapiller M.W."/>
            <person name="Myers E.W."/>
            <person name="Venter J.C."/>
        </authorList>
    </citation>
    <scope>NUCLEOTIDE SEQUENCE [LARGE SCALE GENOMIC DNA]</scope>
</reference>
<reference key="7">
    <citation type="journal article" date="2004" name="Genome Res.">
        <title>The status, quality, and expansion of the NIH full-length cDNA project: the Mammalian Gene Collection (MGC).</title>
        <authorList>
            <consortium name="The MGC Project Team"/>
        </authorList>
    </citation>
    <scope>NUCLEOTIDE SEQUENCE [LARGE SCALE MRNA]</scope>
    <source>
        <tissue>Duodenum</tissue>
    </source>
</reference>
<reference key="8">
    <citation type="journal article" date="2003" name="J. Biol. Chem.">
        <title>Mechanistic studies of human molybdopterin synthase reaction and characterization of mutants identified in group B patients of molybdenum cofactor deficiency.</title>
        <authorList>
            <person name="Leimkuehler S."/>
            <person name="Freuer A."/>
            <person name="Araujo J.A."/>
            <person name="Rajagopalan K.V."/>
            <person name="Mendel R.R."/>
        </authorList>
    </citation>
    <scope>ENZYME ACTIVITY</scope>
    <scope>FUNCTION</scope>
    <scope>SUBUNIT</scope>
</reference>
<reference key="9">
    <citation type="journal article" date="2004" name="Proc. Natl. Acad. Sci. U.S.A.">
        <title>Evidence for the physiological role of a rhodanese-like protein for the biosynthesis of the molybdenum cofactor in humans.</title>
        <authorList>
            <person name="Matthies A."/>
            <person name="Rajagopalan K.V."/>
            <person name="Mendel R.R."/>
            <person name="Leimkuehler S."/>
        </authorList>
    </citation>
    <scope>ENZYME ACTIVITY</scope>
    <scope>FUNCTION</scope>
    <scope>SUBUNIT</scope>
    <scope>SUBCELLULAR LOCATION</scope>
</reference>
<reference key="10">
    <citation type="journal article" date="2006" name="Nat. Biotechnol.">
        <title>A probability-based approach for high-throughput protein phosphorylation analysis and site localization.</title>
        <authorList>
            <person name="Beausoleil S.A."/>
            <person name="Villen J."/>
            <person name="Gerber S.A."/>
            <person name="Rush J."/>
            <person name="Gygi S.P."/>
        </authorList>
    </citation>
    <scope>PHOSPHORYLATION [LARGE SCALE ANALYSIS] AT SER-20</scope>
    <scope>IDENTIFICATION BY MASS SPECTROMETRY [LARGE SCALE ANALYSIS]</scope>
    <source>
        <tissue>Cervix carcinoma</tissue>
    </source>
</reference>
<reference key="11">
    <citation type="journal article" date="2008" name="Mol. Cell">
        <title>Kinase-selective enrichment enables quantitative phosphoproteomics of the kinome across the cell cycle.</title>
        <authorList>
            <person name="Daub H."/>
            <person name="Olsen J.V."/>
            <person name="Bairlein M."/>
            <person name="Gnad F."/>
            <person name="Oppermann F.S."/>
            <person name="Korner R."/>
            <person name="Greff Z."/>
            <person name="Keri G."/>
            <person name="Stemmann O."/>
            <person name="Mann M."/>
        </authorList>
    </citation>
    <scope>PHOSPHORYLATION [LARGE SCALE ANALYSIS] AT SER-20</scope>
    <scope>IDENTIFICATION BY MASS SPECTROMETRY [LARGE SCALE ANALYSIS]</scope>
    <source>
        <tissue>Cervix carcinoma</tissue>
    </source>
</reference>
<reference key="12">
    <citation type="journal article" date="2008" name="Proc. Natl. Acad. Sci. U.S.A.">
        <title>A quantitative atlas of mitotic phosphorylation.</title>
        <authorList>
            <person name="Dephoure N."/>
            <person name="Zhou C."/>
            <person name="Villen J."/>
            <person name="Beausoleil S.A."/>
            <person name="Bakalarski C.E."/>
            <person name="Elledge S.J."/>
            <person name="Gygi S.P."/>
        </authorList>
    </citation>
    <scope>PHOSPHORYLATION [LARGE SCALE ANALYSIS] AT SER-20</scope>
    <scope>IDENTIFICATION BY MASS SPECTROMETRY [LARGE SCALE ANALYSIS]</scope>
    <source>
        <tissue>Cervix carcinoma</tissue>
    </source>
</reference>
<reference key="13">
    <citation type="journal article" date="2009" name="Sci. Signal.">
        <title>Quantitative phosphoproteomic analysis of T cell receptor signaling reveals system-wide modulation of protein-protein interactions.</title>
        <authorList>
            <person name="Mayya V."/>
            <person name="Lundgren D.H."/>
            <person name="Hwang S.-I."/>
            <person name="Rezaul K."/>
            <person name="Wu L."/>
            <person name="Eng J.K."/>
            <person name="Rodionov V."/>
            <person name="Han D.K."/>
        </authorList>
    </citation>
    <scope>PHOSPHORYLATION [LARGE SCALE ANALYSIS] AT SER-20</scope>
    <scope>IDENTIFICATION BY MASS SPECTROMETRY [LARGE SCALE ANALYSIS]</scope>
    <source>
        <tissue>Leukemic T-cell</tissue>
    </source>
</reference>
<reference key="14">
    <citation type="journal article" date="2010" name="Sci. Signal.">
        <title>Quantitative phosphoproteomics reveals widespread full phosphorylation site occupancy during mitosis.</title>
        <authorList>
            <person name="Olsen J.V."/>
            <person name="Vermeulen M."/>
            <person name="Santamaria A."/>
            <person name="Kumar C."/>
            <person name="Miller M.L."/>
            <person name="Jensen L.J."/>
            <person name="Gnad F."/>
            <person name="Cox J."/>
            <person name="Jensen T.S."/>
            <person name="Nigg E.A."/>
            <person name="Brunak S."/>
            <person name="Mann M."/>
        </authorList>
    </citation>
    <scope>PHOSPHORYLATION [LARGE SCALE ANALYSIS] AT SER-20</scope>
    <scope>IDENTIFICATION BY MASS SPECTROMETRY [LARGE SCALE ANALYSIS]</scope>
    <source>
        <tissue>Cervix carcinoma</tissue>
    </source>
</reference>
<reference key="15">
    <citation type="journal article" date="2011" name="BMC Syst. Biol.">
        <title>Initial characterization of the human central proteome.</title>
        <authorList>
            <person name="Burkard T.R."/>
            <person name="Planyavsky M."/>
            <person name="Kaupe I."/>
            <person name="Breitwieser F.P."/>
            <person name="Buerckstuemmer T."/>
            <person name="Bennett K.L."/>
            <person name="Superti-Furga G."/>
            <person name="Colinge J."/>
        </authorList>
    </citation>
    <scope>IDENTIFICATION BY MASS SPECTROMETRY [LARGE SCALE ANALYSIS]</scope>
</reference>
<reference key="16">
    <citation type="journal article" date="2013" name="J. Proteome Res.">
        <title>Toward a comprehensive characterization of a human cancer cell phosphoproteome.</title>
        <authorList>
            <person name="Zhou H."/>
            <person name="Di Palma S."/>
            <person name="Preisinger C."/>
            <person name="Peng M."/>
            <person name="Polat A.N."/>
            <person name="Heck A.J."/>
            <person name="Mohammed S."/>
        </authorList>
    </citation>
    <scope>PHOSPHORYLATION [LARGE SCALE ANALYSIS] AT SER-20</scope>
    <scope>IDENTIFICATION BY MASS SPECTROMETRY [LARGE SCALE ANALYSIS]</scope>
    <source>
        <tissue>Cervix carcinoma</tissue>
        <tissue>Erythroleukemia</tissue>
    </source>
</reference>
<reference key="17">
    <citation type="journal article" date="2014" name="J. Proteomics">
        <title>An enzyme assisted RP-RPLC approach for in-depth analysis of human liver phosphoproteome.</title>
        <authorList>
            <person name="Bian Y."/>
            <person name="Song C."/>
            <person name="Cheng K."/>
            <person name="Dong M."/>
            <person name="Wang F."/>
            <person name="Huang J."/>
            <person name="Sun D."/>
            <person name="Wang L."/>
            <person name="Ye M."/>
            <person name="Zou H."/>
        </authorList>
    </citation>
    <scope>PHOSPHORYLATION [LARGE SCALE ANALYSIS] AT SER-20</scope>
    <scope>IDENTIFICATION BY MASS SPECTROMETRY [LARGE SCALE ANALYSIS]</scope>
    <source>
        <tissue>Liver</tissue>
    </source>
</reference>
<reference key="18">
    <citation type="journal article" date="1999" name="Am. J. Hum. Genet.">
        <title>Human molybdopterin synthase gene: genomic structure and mutations in molybdenum cofactor deficiency type B.</title>
        <authorList>
            <person name="Reiss J."/>
            <person name="Dorche C."/>
            <person name="Stallmeyer B."/>
            <person name="Mendel R.R."/>
            <person name="Cohen N."/>
            <person name="Zabot M.-T."/>
        </authorList>
    </citation>
    <scope>VARIANT MOCODB LYS-168</scope>
</reference>
<reference key="19">
    <citation type="journal article" date="2005" name="Hum. Genet.">
        <title>Ten novel mutations in the molybdenum cofactor genes MOCS1 and MOCS2 and in vitro characterization of a MOCS2 mutation that abolishes the binding ability of molybdopterin synthase.</title>
        <authorList>
            <person name="Leimkuehler S."/>
            <person name="Charcosset M."/>
            <person name="Latour P."/>
            <person name="Dorche C."/>
            <person name="Kleppe S."/>
            <person name="Scaglia F."/>
            <person name="Szymczak I."/>
            <person name="Schupp P."/>
            <person name="Hahnewald R."/>
            <person name="Reiss J."/>
        </authorList>
    </citation>
    <scope>INVOLVEMENT IN MOCODB</scope>
</reference>
<reference key="20">
    <citation type="journal article" date="2006" name="Mol. Genet. Metab.">
        <title>A novel MOCS2 mutation reveals coordinated expression of the small and large subunit of molybdopterin synthase.</title>
        <authorList>
            <person name="Hahnewald R."/>
            <person name="Leimkuehler S."/>
            <person name="Vilaseca A."/>
            <person name="Acquaviva-Bourdain C."/>
            <person name="Lenz U."/>
            <person name="Reiss J."/>
        </authorList>
    </citation>
    <scope>INVOLVEMENT IN MOCODB</scope>
</reference>
<feature type="chain" id="PRO_0000163111" description="Molybdopterin synthase catalytic subunit">
    <location>
        <begin position="1"/>
        <end position="188"/>
    </location>
</feature>
<feature type="binding site" evidence="1">
    <location>
        <begin position="143"/>
        <end position="144"/>
    </location>
    <ligand>
        <name>substrate</name>
    </ligand>
</feature>
<feature type="binding site" evidence="1">
    <location>
        <position position="159"/>
    </location>
    <ligand>
        <name>substrate</name>
    </ligand>
</feature>
<feature type="binding site" evidence="1">
    <location>
        <begin position="166"/>
        <end position="168"/>
    </location>
    <ligand>
        <name>substrate</name>
    </ligand>
</feature>
<feature type="modified residue" description="Phosphoserine" evidence="8 9 10 11 12 13 14">
    <location>
        <position position="20"/>
    </location>
</feature>
<feature type="sequence variant" id="VAR_050091" description="In dbSNP:rs2233213.">
    <original>T</original>
    <variation>A</variation>
    <location>
        <position position="50"/>
    </location>
</feature>
<feature type="sequence variant" id="VAR_050092" description="In dbSNP:rs2233215.">
    <original>T</original>
    <variation>A</variation>
    <location>
        <position position="77"/>
    </location>
</feature>
<feature type="sequence variant" id="VAR_050093" description="In dbSNP:rs2233218.">
    <original>H</original>
    <variation>Y</variation>
    <location>
        <position position="123"/>
    </location>
</feature>
<feature type="sequence variant" id="VAR_012765" description="In MOCODB; dbSNP:rs121908605." evidence="3">
    <original>E</original>
    <variation>K</variation>
    <location>
        <position position="168"/>
    </location>
</feature>
<feature type="sequence variant" id="VAR_050094" description="In dbSNP:rs2233221.">
    <original>N</original>
    <variation>S</variation>
    <location>
        <position position="187"/>
    </location>
</feature>
<feature type="strand" evidence="15">
    <location>
        <begin position="45"/>
        <end position="52"/>
    </location>
</feature>
<feature type="helix" evidence="15">
    <location>
        <begin position="56"/>
        <end position="63"/>
    </location>
</feature>
<feature type="strand" evidence="15">
    <location>
        <begin position="70"/>
        <end position="78"/>
    </location>
</feature>
<feature type="strand" evidence="15">
    <location>
        <begin position="80"/>
        <end position="82"/>
    </location>
</feature>
<feature type="strand" evidence="15">
    <location>
        <begin position="85"/>
        <end position="94"/>
    </location>
</feature>
<feature type="helix" evidence="15">
    <location>
        <begin position="98"/>
        <end position="113"/>
    </location>
</feature>
<feature type="strand" evidence="15">
    <location>
        <begin position="116"/>
        <end position="124"/>
    </location>
</feature>
<feature type="strand" evidence="15">
    <location>
        <begin position="126"/>
        <end position="130"/>
    </location>
</feature>
<feature type="strand" evidence="15">
    <location>
        <begin position="132"/>
        <end position="143"/>
    </location>
</feature>
<feature type="helix" evidence="15">
    <location>
        <begin position="144"/>
        <end position="161"/>
    </location>
</feature>
<feature type="strand" evidence="15">
    <location>
        <begin position="164"/>
        <end position="170"/>
    </location>
</feature>
<proteinExistence type="evidence at protein level"/>
<dbReference type="EC" id="2.8.1.12" evidence="1"/>
<dbReference type="EMBL" id="AF091871">
    <property type="protein sequence ID" value="AAD14599.1"/>
    <property type="molecule type" value="mRNA"/>
</dbReference>
<dbReference type="EMBL" id="AF117815">
    <property type="protein sequence ID" value="AAD13297.1"/>
    <property type="molecule type" value="mRNA"/>
</dbReference>
<dbReference type="EMBL" id="AF155659">
    <property type="protein sequence ID" value="AAF67478.1"/>
    <property type="molecule type" value="mRNA"/>
</dbReference>
<dbReference type="EMBL" id="AK312887">
    <property type="protein sequence ID" value="BAG35735.1"/>
    <property type="molecule type" value="mRNA"/>
</dbReference>
<dbReference type="EMBL" id="CR457172">
    <property type="protein sequence ID" value="CAG33453.1"/>
    <property type="molecule type" value="mRNA"/>
</dbReference>
<dbReference type="EMBL" id="CH471123">
    <property type="protein sequence ID" value="EAW54874.1"/>
    <property type="molecule type" value="Genomic_DNA"/>
</dbReference>
<dbReference type="EMBL" id="BC046097">
    <property type="protein sequence ID" value="AAH46097.1"/>
    <property type="molecule type" value="mRNA"/>
</dbReference>
<dbReference type="CCDS" id="CCDS3958.1"/>
<dbReference type="PIR" id="B59370">
    <property type="entry name" value="B59370"/>
</dbReference>
<dbReference type="RefSeq" id="NP_004522.1">
    <property type="nucleotide sequence ID" value="NM_004531.5"/>
</dbReference>
<dbReference type="PDB" id="4AP8">
    <property type="method" value="X-ray"/>
    <property type="resolution" value="2.78 A"/>
    <property type="chains" value="A/B/C/D=38-172"/>
</dbReference>
<dbReference type="PDB" id="5MPO">
    <property type="method" value="X-ray"/>
    <property type="resolution" value="2.43 A"/>
    <property type="chains" value="C/D=27-179"/>
</dbReference>
<dbReference type="PDBsum" id="4AP8"/>
<dbReference type="PDBsum" id="5MPO"/>
<dbReference type="SMR" id="O96007"/>
<dbReference type="BioGRID" id="110481">
    <property type="interactions" value="22"/>
</dbReference>
<dbReference type="ComplexPortal" id="CPX-6341">
    <property type="entry name" value="Molybdopterin synthase complex"/>
</dbReference>
<dbReference type="CORUM" id="O96007"/>
<dbReference type="FunCoup" id="O96007">
    <property type="interactions" value="674"/>
</dbReference>
<dbReference type="IntAct" id="O96007">
    <property type="interactions" value="13"/>
</dbReference>
<dbReference type="STRING" id="9606.ENSP00000380157"/>
<dbReference type="GlyGen" id="O96007">
    <property type="glycosylation" value="1 site, 1 O-linked glycan (1 site)"/>
</dbReference>
<dbReference type="iPTMnet" id="O96007"/>
<dbReference type="PhosphoSitePlus" id="O96007"/>
<dbReference type="BioMuta" id="MOCS2"/>
<dbReference type="jPOST" id="O96007"/>
<dbReference type="MassIVE" id="O96007"/>
<dbReference type="PaxDb" id="9606-ENSP00000380157"/>
<dbReference type="PeptideAtlas" id="O96007"/>
<dbReference type="ProteomicsDB" id="51186"/>
<dbReference type="Pumba" id="O96007"/>
<dbReference type="Antibodypedia" id="23330">
    <property type="antibodies" value="148 antibodies from 23 providers"/>
</dbReference>
<dbReference type="DNASU" id="4338"/>
<dbReference type="Ensembl" id="ENST00000396954.8">
    <property type="protein sequence ID" value="ENSP00000380157.3"/>
    <property type="gene ID" value="ENSG00000164172.20"/>
</dbReference>
<dbReference type="GeneID" id="4338"/>
<dbReference type="KEGG" id="hsa:4338"/>
<dbReference type="MANE-Select" id="ENST00000396954.8">
    <property type="protein sequence ID" value="ENSP00000380157.3"/>
    <property type="RefSeq nucleotide sequence ID" value="NM_004531.5"/>
    <property type="RefSeq protein sequence ID" value="NP_004522.1"/>
</dbReference>
<dbReference type="UCSC" id="uc003joz.5">
    <property type="organism name" value="human"/>
</dbReference>
<dbReference type="AGR" id="HGNC:7193"/>
<dbReference type="CTD" id="4338"/>
<dbReference type="DisGeNET" id="4338"/>
<dbReference type="GeneCards" id="MOCS2"/>
<dbReference type="GeneReviews" id="MOCS2"/>
<dbReference type="HGNC" id="HGNC:7193">
    <property type="gene designation" value="MOCS2"/>
</dbReference>
<dbReference type="HPA" id="ENSG00000164172">
    <property type="expression patterns" value="Low tissue specificity"/>
</dbReference>
<dbReference type="MalaCards" id="MOCS2"/>
<dbReference type="MIM" id="252160">
    <property type="type" value="phenotype"/>
</dbReference>
<dbReference type="MIM" id="603708">
    <property type="type" value="gene"/>
</dbReference>
<dbReference type="neXtProt" id="NX_O96007"/>
<dbReference type="OpenTargets" id="ENSG00000164172"/>
<dbReference type="Orphanet" id="308393">
    <property type="disease" value="Sulfite oxidase deficiency due to molybdenum cofactor deficiency type B"/>
</dbReference>
<dbReference type="PharmGKB" id="PA30903"/>
<dbReference type="VEuPathDB" id="HostDB:ENSG00000164172"/>
<dbReference type="eggNOG" id="KOG3307">
    <property type="taxonomic scope" value="Eukaryota"/>
</dbReference>
<dbReference type="GeneTree" id="ENSGT00510000047669"/>
<dbReference type="HOGENOM" id="CLU_089568_0_1_1"/>
<dbReference type="InParanoid" id="O96007"/>
<dbReference type="OMA" id="WKHQFFA"/>
<dbReference type="OrthoDB" id="5531344at2759"/>
<dbReference type="PAN-GO" id="O96007">
    <property type="GO annotations" value="1 GO annotation based on evolutionary models"/>
</dbReference>
<dbReference type="PhylomeDB" id="O96007"/>
<dbReference type="TreeFam" id="TF314334"/>
<dbReference type="BioCyc" id="MetaCyc:HS09033-MONOMER"/>
<dbReference type="BRENDA" id="2.8.1.12">
    <property type="organism ID" value="2681"/>
</dbReference>
<dbReference type="PathwayCommons" id="O96007"/>
<dbReference type="Reactome" id="R-HSA-947581">
    <property type="pathway name" value="Molybdenum cofactor biosynthesis"/>
</dbReference>
<dbReference type="SignaLink" id="O96007"/>
<dbReference type="UniPathway" id="UPA00344"/>
<dbReference type="BioGRID-ORCS" id="4338">
    <property type="hits" value="21 hits in 1157 CRISPR screens"/>
</dbReference>
<dbReference type="ChiTaRS" id="MOCS2">
    <property type="organism name" value="human"/>
</dbReference>
<dbReference type="EvolutionaryTrace" id="O96007"/>
<dbReference type="GeneWiki" id="MOCS2"/>
<dbReference type="GenomeRNAi" id="4338"/>
<dbReference type="Pharos" id="O96007">
    <property type="development level" value="Tbio"/>
</dbReference>
<dbReference type="Proteomes" id="UP000005640">
    <property type="component" value="Chromosome 5"/>
</dbReference>
<dbReference type="RNAct" id="O96007">
    <property type="molecule type" value="protein"/>
</dbReference>
<dbReference type="Bgee" id="ENSG00000164172">
    <property type="expression patterns" value="Expressed in anterior cingulate cortex and 200 other cell types or tissues"/>
</dbReference>
<dbReference type="ExpressionAtlas" id="O96007">
    <property type="expression patterns" value="baseline and differential"/>
</dbReference>
<dbReference type="GO" id="GO:0005829">
    <property type="term" value="C:cytosol"/>
    <property type="evidence" value="ECO:0000314"/>
    <property type="project" value="UniProtKB"/>
</dbReference>
<dbReference type="GO" id="GO:1990140">
    <property type="term" value="C:molybdopterin synthase complex"/>
    <property type="evidence" value="ECO:0000314"/>
    <property type="project" value="UniProtKB"/>
</dbReference>
<dbReference type="GO" id="GO:0016607">
    <property type="term" value="C:nuclear speck"/>
    <property type="evidence" value="ECO:0000314"/>
    <property type="project" value="HPA"/>
</dbReference>
<dbReference type="GO" id="GO:0005654">
    <property type="term" value="C:nucleoplasm"/>
    <property type="evidence" value="ECO:0000314"/>
    <property type="project" value="HPA"/>
</dbReference>
<dbReference type="GO" id="GO:0030366">
    <property type="term" value="F:molybdopterin synthase activity"/>
    <property type="evidence" value="ECO:0000314"/>
    <property type="project" value="UniProtKB"/>
</dbReference>
<dbReference type="GO" id="GO:0006777">
    <property type="term" value="P:Mo-molybdopterin cofactor biosynthetic process"/>
    <property type="evidence" value="ECO:0000314"/>
    <property type="project" value="UniProtKB"/>
</dbReference>
<dbReference type="GO" id="GO:0032324">
    <property type="term" value="P:molybdopterin cofactor biosynthetic process"/>
    <property type="evidence" value="ECO:0000304"/>
    <property type="project" value="Reactome"/>
</dbReference>
<dbReference type="CDD" id="cd00756">
    <property type="entry name" value="MoaE"/>
    <property type="match status" value="1"/>
</dbReference>
<dbReference type="FunFam" id="3.90.1170.40:FF:000002">
    <property type="entry name" value="Molybdopterin synthase catalytic subunit"/>
    <property type="match status" value="1"/>
</dbReference>
<dbReference type="Gene3D" id="3.90.1170.40">
    <property type="entry name" value="Molybdopterin biosynthesis MoaE subunit"/>
    <property type="match status" value="1"/>
</dbReference>
<dbReference type="HAMAP" id="MF_03052">
    <property type="entry name" value="MOC2B"/>
    <property type="match status" value="1"/>
</dbReference>
<dbReference type="InterPro" id="IPR036563">
    <property type="entry name" value="MoaE_sf"/>
</dbReference>
<dbReference type="InterPro" id="IPR028888">
    <property type="entry name" value="MOCS2B_euk"/>
</dbReference>
<dbReference type="InterPro" id="IPR003448">
    <property type="entry name" value="Mopterin_biosynth_MoaE"/>
</dbReference>
<dbReference type="PANTHER" id="PTHR23404">
    <property type="entry name" value="MOLYBDOPTERIN SYNTHASE RELATED"/>
    <property type="match status" value="1"/>
</dbReference>
<dbReference type="Pfam" id="PF02391">
    <property type="entry name" value="MoaE"/>
    <property type="match status" value="1"/>
</dbReference>
<dbReference type="SUPFAM" id="SSF54690">
    <property type="entry name" value="Molybdopterin synthase subunit MoaE"/>
    <property type="match status" value="1"/>
</dbReference>